<protein>
    <recommendedName>
        <fullName evidence="1">Phosphoserine aminotransferase</fullName>
        <ecNumber evidence="1">2.6.1.52</ecNumber>
    </recommendedName>
    <alternativeName>
        <fullName evidence="1">Phosphohydroxythreonine aminotransferase</fullName>
        <shortName evidence="1">PSAT</shortName>
    </alternativeName>
</protein>
<reference key="1">
    <citation type="journal article" date="2003" name="J. Bacteriol.">
        <title>Comparative analyses of the complete genome sequences of Pierce's disease and citrus variegated chlorosis strains of Xylella fastidiosa.</title>
        <authorList>
            <person name="Van Sluys M.A."/>
            <person name="de Oliveira M.C."/>
            <person name="Monteiro-Vitorello C.B."/>
            <person name="Miyaki C.Y."/>
            <person name="Furlan L.R."/>
            <person name="Camargo L.E.A."/>
            <person name="da Silva A.C.R."/>
            <person name="Moon D.H."/>
            <person name="Takita M.A."/>
            <person name="Lemos E.G.M."/>
            <person name="Machado M.A."/>
            <person name="Ferro M.I.T."/>
            <person name="da Silva F.R."/>
            <person name="Goldman M.H.S."/>
            <person name="Goldman G.H."/>
            <person name="Lemos M.V.F."/>
            <person name="El-Dorry H."/>
            <person name="Tsai S.M."/>
            <person name="Carrer H."/>
            <person name="Carraro D.M."/>
            <person name="de Oliveira R.C."/>
            <person name="Nunes L.R."/>
            <person name="Siqueira W.J."/>
            <person name="Coutinho L.L."/>
            <person name="Kimura E.T."/>
            <person name="Ferro E.S."/>
            <person name="Harakava R."/>
            <person name="Kuramae E.E."/>
            <person name="Marino C.L."/>
            <person name="Giglioti E."/>
            <person name="Abreu I.L."/>
            <person name="Alves L.M.C."/>
            <person name="do Amaral A.M."/>
            <person name="Baia G.S."/>
            <person name="Blanco S.R."/>
            <person name="Brito M.S."/>
            <person name="Cannavan F.S."/>
            <person name="Celestino A.V."/>
            <person name="da Cunha A.F."/>
            <person name="Fenille R.C."/>
            <person name="Ferro J.A."/>
            <person name="Formighieri E.F."/>
            <person name="Kishi L.T."/>
            <person name="Leoni S.G."/>
            <person name="Oliveira A.R."/>
            <person name="Rosa V.E. Jr."/>
            <person name="Sassaki F.T."/>
            <person name="Sena J.A.D."/>
            <person name="de Souza A.A."/>
            <person name="Truffi D."/>
            <person name="Tsukumo F."/>
            <person name="Yanai G.M."/>
            <person name="Zaros L.G."/>
            <person name="Civerolo E.L."/>
            <person name="Simpson A.J.G."/>
            <person name="Almeida N.F. Jr."/>
            <person name="Setubal J.C."/>
            <person name="Kitajima J.P."/>
        </authorList>
    </citation>
    <scope>NUCLEOTIDE SEQUENCE [LARGE SCALE GENOMIC DNA]</scope>
    <source>
        <strain>Temecula1 / ATCC 700964</strain>
    </source>
</reference>
<dbReference type="EC" id="2.6.1.52" evidence="1"/>
<dbReference type="EMBL" id="AE009442">
    <property type="protein sequence ID" value="AAO29205.1"/>
    <property type="molecule type" value="Genomic_DNA"/>
</dbReference>
<dbReference type="RefSeq" id="WP_011098070.1">
    <property type="nucleotide sequence ID" value="NC_004556.1"/>
</dbReference>
<dbReference type="SMR" id="Q87BU0"/>
<dbReference type="GeneID" id="93905175"/>
<dbReference type="KEGG" id="xft:PD_1358"/>
<dbReference type="HOGENOM" id="CLU_034866_0_2_6"/>
<dbReference type="UniPathway" id="UPA00135">
    <property type="reaction ID" value="UER00197"/>
</dbReference>
<dbReference type="UniPathway" id="UPA00244">
    <property type="reaction ID" value="UER00311"/>
</dbReference>
<dbReference type="Proteomes" id="UP000002516">
    <property type="component" value="Chromosome"/>
</dbReference>
<dbReference type="GO" id="GO:0005737">
    <property type="term" value="C:cytoplasm"/>
    <property type="evidence" value="ECO:0007669"/>
    <property type="project" value="UniProtKB-SubCell"/>
</dbReference>
<dbReference type="GO" id="GO:0004648">
    <property type="term" value="F:O-phospho-L-serine:2-oxoglutarate aminotransferase activity"/>
    <property type="evidence" value="ECO:0007669"/>
    <property type="project" value="UniProtKB-UniRule"/>
</dbReference>
<dbReference type="GO" id="GO:0030170">
    <property type="term" value="F:pyridoxal phosphate binding"/>
    <property type="evidence" value="ECO:0007669"/>
    <property type="project" value="UniProtKB-UniRule"/>
</dbReference>
<dbReference type="GO" id="GO:0006564">
    <property type="term" value="P:L-serine biosynthetic process"/>
    <property type="evidence" value="ECO:0007669"/>
    <property type="project" value="UniProtKB-UniRule"/>
</dbReference>
<dbReference type="GO" id="GO:0008615">
    <property type="term" value="P:pyridoxine biosynthetic process"/>
    <property type="evidence" value="ECO:0007669"/>
    <property type="project" value="UniProtKB-UniRule"/>
</dbReference>
<dbReference type="FunFam" id="3.40.640.10:FF:000010">
    <property type="entry name" value="Phosphoserine aminotransferase"/>
    <property type="match status" value="1"/>
</dbReference>
<dbReference type="FunFam" id="3.90.1150.10:FF:000006">
    <property type="entry name" value="Phosphoserine aminotransferase"/>
    <property type="match status" value="1"/>
</dbReference>
<dbReference type="Gene3D" id="3.90.1150.10">
    <property type="entry name" value="Aspartate Aminotransferase, domain 1"/>
    <property type="match status" value="1"/>
</dbReference>
<dbReference type="Gene3D" id="3.40.640.10">
    <property type="entry name" value="Type I PLP-dependent aspartate aminotransferase-like (Major domain)"/>
    <property type="match status" value="1"/>
</dbReference>
<dbReference type="HAMAP" id="MF_00160">
    <property type="entry name" value="SerC_aminotrans_5"/>
    <property type="match status" value="1"/>
</dbReference>
<dbReference type="InterPro" id="IPR000192">
    <property type="entry name" value="Aminotrans_V_dom"/>
</dbReference>
<dbReference type="InterPro" id="IPR022278">
    <property type="entry name" value="Pser_aminoTfrase"/>
</dbReference>
<dbReference type="InterPro" id="IPR015424">
    <property type="entry name" value="PyrdxlP-dep_Trfase"/>
</dbReference>
<dbReference type="InterPro" id="IPR015421">
    <property type="entry name" value="PyrdxlP-dep_Trfase_major"/>
</dbReference>
<dbReference type="InterPro" id="IPR015422">
    <property type="entry name" value="PyrdxlP-dep_Trfase_small"/>
</dbReference>
<dbReference type="NCBIfam" id="NF003764">
    <property type="entry name" value="PRK05355.1"/>
    <property type="match status" value="1"/>
</dbReference>
<dbReference type="NCBIfam" id="TIGR01364">
    <property type="entry name" value="serC_1"/>
    <property type="match status" value="1"/>
</dbReference>
<dbReference type="PANTHER" id="PTHR43247">
    <property type="entry name" value="PHOSPHOSERINE AMINOTRANSFERASE"/>
    <property type="match status" value="1"/>
</dbReference>
<dbReference type="PANTHER" id="PTHR43247:SF1">
    <property type="entry name" value="PHOSPHOSERINE AMINOTRANSFERASE"/>
    <property type="match status" value="1"/>
</dbReference>
<dbReference type="Pfam" id="PF00266">
    <property type="entry name" value="Aminotran_5"/>
    <property type="match status" value="1"/>
</dbReference>
<dbReference type="PIRSF" id="PIRSF000525">
    <property type="entry name" value="SerC"/>
    <property type="match status" value="1"/>
</dbReference>
<dbReference type="SUPFAM" id="SSF53383">
    <property type="entry name" value="PLP-dependent transferases"/>
    <property type="match status" value="1"/>
</dbReference>
<name>SERC_XYLFT</name>
<accession>Q87BU0</accession>
<proteinExistence type="inferred from homology"/>
<comment type="function">
    <text evidence="1">Catalyzes the reversible conversion of 3-phosphohydroxypyruvate to phosphoserine and of 3-hydroxy-2-oxo-4-phosphonooxybutanoate to phosphohydroxythreonine.</text>
</comment>
<comment type="catalytic activity">
    <reaction evidence="1">
        <text>O-phospho-L-serine + 2-oxoglutarate = 3-phosphooxypyruvate + L-glutamate</text>
        <dbReference type="Rhea" id="RHEA:14329"/>
        <dbReference type="ChEBI" id="CHEBI:16810"/>
        <dbReference type="ChEBI" id="CHEBI:18110"/>
        <dbReference type="ChEBI" id="CHEBI:29985"/>
        <dbReference type="ChEBI" id="CHEBI:57524"/>
        <dbReference type="EC" id="2.6.1.52"/>
    </reaction>
</comment>
<comment type="catalytic activity">
    <reaction evidence="1">
        <text>4-(phosphooxy)-L-threonine + 2-oxoglutarate = (R)-3-hydroxy-2-oxo-4-phosphooxybutanoate + L-glutamate</text>
        <dbReference type="Rhea" id="RHEA:16573"/>
        <dbReference type="ChEBI" id="CHEBI:16810"/>
        <dbReference type="ChEBI" id="CHEBI:29985"/>
        <dbReference type="ChEBI" id="CHEBI:58452"/>
        <dbReference type="ChEBI" id="CHEBI:58538"/>
        <dbReference type="EC" id="2.6.1.52"/>
    </reaction>
</comment>
<comment type="cofactor">
    <cofactor evidence="1">
        <name>pyridoxal 5'-phosphate</name>
        <dbReference type="ChEBI" id="CHEBI:597326"/>
    </cofactor>
    <text evidence="1">Binds 1 pyridoxal phosphate per subunit.</text>
</comment>
<comment type="pathway">
    <text evidence="1">Amino-acid biosynthesis; L-serine biosynthesis; L-serine from 3-phospho-D-glycerate: step 2/3.</text>
</comment>
<comment type="pathway">
    <text evidence="1">Cofactor biosynthesis; pyridoxine 5'-phosphate biosynthesis; pyridoxine 5'-phosphate from D-erythrose 4-phosphate: step 3/5.</text>
</comment>
<comment type="subunit">
    <text evidence="1">Homodimer.</text>
</comment>
<comment type="subcellular location">
    <subcellularLocation>
        <location evidence="1">Cytoplasm</location>
    </subcellularLocation>
</comment>
<comment type="similarity">
    <text evidence="1">Belongs to the class-V pyridoxal-phosphate-dependent aminotransferase family. SerC subfamily.</text>
</comment>
<gene>
    <name evidence="1" type="primary">serC</name>
    <name type="ordered locus">PD_1358</name>
</gene>
<feature type="chain" id="PRO_0000150225" description="Phosphoserine aminotransferase">
    <location>
        <begin position="1"/>
        <end position="362"/>
    </location>
</feature>
<feature type="binding site" evidence="1">
    <location>
        <position position="43"/>
    </location>
    <ligand>
        <name>L-glutamate</name>
        <dbReference type="ChEBI" id="CHEBI:29985"/>
    </ligand>
</feature>
<feature type="binding site" evidence="1">
    <location>
        <begin position="77"/>
        <end position="78"/>
    </location>
    <ligand>
        <name>pyridoxal 5'-phosphate</name>
        <dbReference type="ChEBI" id="CHEBI:597326"/>
    </ligand>
</feature>
<feature type="binding site" evidence="1">
    <location>
        <position position="103"/>
    </location>
    <ligand>
        <name>pyridoxal 5'-phosphate</name>
        <dbReference type="ChEBI" id="CHEBI:597326"/>
    </ligand>
</feature>
<feature type="binding site" evidence="1">
    <location>
        <position position="153"/>
    </location>
    <ligand>
        <name>pyridoxal 5'-phosphate</name>
        <dbReference type="ChEBI" id="CHEBI:597326"/>
    </ligand>
</feature>
<feature type="binding site" evidence="1">
    <location>
        <position position="173"/>
    </location>
    <ligand>
        <name>pyridoxal 5'-phosphate</name>
        <dbReference type="ChEBI" id="CHEBI:597326"/>
    </ligand>
</feature>
<feature type="binding site" evidence="1">
    <location>
        <position position="196"/>
    </location>
    <ligand>
        <name>pyridoxal 5'-phosphate</name>
        <dbReference type="ChEBI" id="CHEBI:597326"/>
    </ligand>
</feature>
<feature type="binding site" evidence="1">
    <location>
        <begin position="238"/>
        <end position="239"/>
    </location>
    <ligand>
        <name>pyridoxal 5'-phosphate</name>
        <dbReference type="ChEBI" id="CHEBI:597326"/>
    </ligand>
</feature>
<feature type="modified residue" description="N6-(pyridoxal phosphate)lysine" evidence="1">
    <location>
        <position position="197"/>
    </location>
</feature>
<evidence type="ECO:0000255" key="1">
    <source>
        <dbReference type="HAMAP-Rule" id="MF_00160"/>
    </source>
</evidence>
<organism>
    <name type="scientific">Xylella fastidiosa (strain Temecula1 / ATCC 700964)</name>
    <dbReference type="NCBI Taxonomy" id="183190"/>
    <lineage>
        <taxon>Bacteria</taxon>
        <taxon>Pseudomonadati</taxon>
        <taxon>Pseudomonadota</taxon>
        <taxon>Gammaproteobacteria</taxon>
        <taxon>Lysobacterales</taxon>
        <taxon>Lysobacteraceae</taxon>
        <taxon>Xylella</taxon>
    </lineage>
</organism>
<keyword id="KW-0028">Amino-acid biosynthesis</keyword>
<keyword id="KW-0032">Aminotransferase</keyword>
<keyword id="KW-0963">Cytoplasm</keyword>
<keyword id="KW-0663">Pyridoxal phosphate</keyword>
<keyword id="KW-0664">Pyridoxine biosynthesis</keyword>
<keyword id="KW-1185">Reference proteome</keyword>
<keyword id="KW-0718">Serine biosynthesis</keyword>
<keyword id="KW-0808">Transferase</keyword>
<sequence>MTMRIFNFSPGPATLPEPVLRQAQAEMLEWNAVGASVMEISHRSAEFIALAKGIESDLRCLLGVPDDYAVLFLSGGATTQQALLPLNFAAPGQTADYVVTGHWSKTALKQASPYVNINVVADGERDGFQDIPNRAGWRLSKDAAYVHMTANETIHGVEFRQTPDVGDVPLFADFSSSIAADLIDVSKYDLIYAGAQKNLGPVGICVVIVRRTLLERTGQPRADIFTYASHAERDSMLNTPPTFNWYLLGLTVKWMLAEGGVQEFARRNQAKAQLVYQTIDQSGGFYRNGVAAAVRSRMNIPFFLPNVEQDARFAAEAKAAGLLSLKGHKAVGGIRASLYNAMPLAGVQALVAFMHDFQQRYG</sequence>